<proteinExistence type="evidence at protein level"/>
<protein>
    <recommendedName>
        <fullName evidence="7">Baseplate protein gp9</fullName>
    </recommendedName>
    <alternativeName>
        <fullName evidence="7">Gene product 9</fullName>
        <shortName>gp9</shortName>
    </alternativeName>
</protein>
<sequence>MFIQEPKKLIDTGEIGNASTGDILFDGGNKINSDFNAIYNAFGDQRKMAVANGTGADGQIIHATGYYQKHSITEYATPVKVGTRHDIDTSTVGVKVIIERGELGDCVEFINSNGSISVTNPLTIQAIDSIKGVSGNLVVTSPYSKVTLRCISSDNSTSVWNYSIESMFGQKESPAEGTWNISTSGSVDIPLFHRTEYNMAKLLVTCQSVDGRKIKTAEINILVDTVNSEVISSEYAVMRVGNETEEDEIANIAFSIKENYVTATISSSTVGMRAAVKVIATQKIGVAQ</sequence>
<comment type="function">
    <text evidence="1 5 6">Peripheral baseplate protein that is part of the tail fiber network (PubMed:10545330, PubMed:27193680). Connects the long tail fibers to the baseplate and, after virus attachment to a host cell, probably changes its conformation to trigger the signal for tail contraction (PubMed:10545330). Involved in the tail assembly (PubMed:21129200).</text>
</comment>
<comment type="subunit">
    <text evidence="1 3 5">Homotrimer (PubMed:27193680). The gp9 trimer interacts with the long tail fiber (LTF) that comprises gp34 trimer, gp35, gp36 and a gp37 trimer. Part of the baseplate macromolecular complex which consists of gp5, gp5.4, gp27 (central spike complex); gp6, gp25, gp53 (inner baseplate); gp7, gp8 (intermediate baseplate); gp9, gp10, gp11, gp12 (peripheral); gp48 and gp54 (proximal region of the tail tube).</text>
</comment>
<comment type="subcellular location">
    <subcellularLocation>
        <location evidence="2 4 5">Virion</location>
    </subcellularLocation>
    <text evidence="6">Present in 18 copies in the baseplate.</text>
</comment>
<comment type="induction">
    <text evidence="7">Expressed in the late phase of the viral replicative cycle.</text>
</comment>
<comment type="domain">
    <text>The C-terminus is bound to the baseplate, and the N-terminus coiled-coil domain is associated with the long tail fibers.</text>
</comment>
<evidence type="ECO:0000269" key="1">
    <source>
    </source>
</evidence>
<evidence type="ECO:0000269" key="2">
    <source>
    </source>
</evidence>
<evidence type="ECO:0000269" key="3">
    <source>
    </source>
</evidence>
<evidence type="ECO:0000269" key="4">
    <source>
    </source>
</evidence>
<evidence type="ECO:0000269" key="5">
    <source>
    </source>
</evidence>
<evidence type="ECO:0000303" key="6">
    <source>
    </source>
</evidence>
<evidence type="ECO:0000305" key="7"/>
<evidence type="ECO:0007829" key="8">
    <source>
        <dbReference type="PDB" id="1QEX"/>
    </source>
</evidence>
<keyword id="KW-0002">3D-structure</keyword>
<keyword id="KW-0175">Coiled coil</keyword>
<keyword id="KW-1185">Reference proteome</keyword>
<keyword id="KW-1226">Viral baseplate protein</keyword>
<keyword id="KW-1188">Viral release from host cell</keyword>
<keyword id="KW-1245">Viral tail assembly</keyword>
<keyword id="KW-1227">Viral tail protein</keyword>
<keyword id="KW-0946">Virion</keyword>
<name>BP09_BPT4</name>
<feature type="chain" id="PRO_0000164999" description="Baseplate protein gp9">
    <location>
        <begin position="1"/>
        <end position="288"/>
    </location>
</feature>
<feature type="coiled-coil region" evidence="1">
    <location>
        <begin position="20"/>
        <end position="80"/>
    </location>
</feature>
<feature type="strand" evidence="8">
    <location>
        <begin position="15"/>
        <end position="19"/>
    </location>
</feature>
<feature type="helix" evidence="8">
    <location>
        <begin position="20"/>
        <end position="39"/>
    </location>
</feature>
<feature type="helix" evidence="8">
    <location>
        <begin position="45"/>
        <end position="49"/>
    </location>
</feature>
<feature type="strand" evidence="8">
    <location>
        <begin position="50"/>
        <end position="53"/>
    </location>
</feature>
<feature type="helix" evidence="8">
    <location>
        <begin position="74"/>
        <end position="76"/>
    </location>
</feature>
<feature type="strand" evidence="8">
    <location>
        <begin position="84"/>
        <end position="86"/>
    </location>
</feature>
<feature type="strand" evidence="8">
    <location>
        <begin position="90"/>
        <end position="92"/>
    </location>
</feature>
<feature type="strand" evidence="8">
    <location>
        <begin position="94"/>
        <end position="98"/>
    </location>
</feature>
<feature type="strand" evidence="8">
    <location>
        <begin position="106"/>
        <end position="110"/>
    </location>
</feature>
<feature type="strand" evidence="8">
    <location>
        <begin position="118"/>
        <end position="120"/>
    </location>
</feature>
<feature type="strand" evidence="8">
    <location>
        <begin position="122"/>
        <end position="130"/>
    </location>
</feature>
<feature type="strand" evidence="8">
    <location>
        <begin position="134"/>
        <end position="139"/>
    </location>
</feature>
<feature type="strand" evidence="8">
    <location>
        <begin position="144"/>
        <end position="152"/>
    </location>
</feature>
<feature type="strand" evidence="8">
    <location>
        <begin position="154"/>
        <end position="156"/>
    </location>
</feature>
<feature type="strand" evidence="8">
    <location>
        <begin position="159"/>
        <end position="169"/>
    </location>
</feature>
<feature type="strand" evidence="8">
    <location>
        <begin position="176"/>
        <end position="180"/>
    </location>
</feature>
<feature type="strand" evidence="8">
    <location>
        <begin position="185"/>
        <end position="193"/>
    </location>
</feature>
<feature type="turn" evidence="8">
    <location>
        <begin position="194"/>
        <end position="196"/>
    </location>
</feature>
<feature type="strand" evidence="8">
    <location>
        <begin position="198"/>
        <end position="208"/>
    </location>
</feature>
<feature type="strand" evidence="8">
    <location>
        <begin position="214"/>
        <end position="224"/>
    </location>
</feature>
<feature type="turn" evidence="8">
    <location>
        <begin position="225"/>
        <end position="228"/>
    </location>
</feature>
<feature type="strand" evidence="8">
    <location>
        <begin position="229"/>
        <end position="241"/>
    </location>
</feature>
<feature type="strand" evidence="8">
    <location>
        <begin position="243"/>
        <end position="247"/>
    </location>
</feature>
<feature type="strand" evidence="8">
    <location>
        <begin position="251"/>
        <end position="257"/>
    </location>
</feature>
<feature type="strand" evidence="8">
    <location>
        <begin position="260"/>
        <end position="266"/>
    </location>
</feature>
<feature type="strand" evidence="8">
    <location>
        <begin position="268"/>
        <end position="282"/>
    </location>
</feature>
<organism>
    <name type="scientific">Enterobacteria phage T4</name>
    <name type="common">Bacteriophage T4</name>
    <dbReference type="NCBI Taxonomy" id="10665"/>
    <lineage>
        <taxon>Viruses</taxon>
        <taxon>Duplodnaviria</taxon>
        <taxon>Heunggongvirae</taxon>
        <taxon>Uroviricota</taxon>
        <taxon>Caudoviricetes</taxon>
        <taxon>Straboviridae</taxon>
        <taxon>Tevenvirinae</taxon>
        <taxon>Tequatrovirus</taxon>
    </lineage>
</organism>
<gene>
    <name type="primary">9</name>
</gene>
<organismHost>
    <name type="scientific">Escherichia coli</name>
    <dbReference type="NCBI Taxonomy" id="562"/>
</organismHost>
<accession>P10927</accession>
<reference key="1">
    <citation type="journal article" date="1989" name="Nucleic Acids Res.">
        <title>Nucleotide sequences of bacteriophage T4 genes 9, 10 and 11.</title>
        <authorList>
            <person name="Prilipov A.G."/>
            <person name="Selivanov N.A."/>
            <person name="Efimov V.P."/>
            <person name="Marusich E.I."/>
            <person name="Mesyanzhinov V.V."/>
        </authorList>
    </citation>
    <scope>NUCLEOTIDE SEQUENCE [GENOMIC DNA]</scope>
    <source>
        <strain>D</strain>
    </source>
</reference>
<reference key="2">
    <citation type="journal article" date="2003" name="Microbiol. Mol. Biol. Rev.">
        <title>Bacteriophage T4 genome.</title>
        <authorList>
            <person name="Miller E.S."/>
            <person name="Kutter E."/>
            <person name="Mosig G."/>
            <person name="Arisaka F."/>
            <person name="Kunisawa T."/>
            <person name="Ruger W."/>
        </authorList>
    </citation>
    <scope>NUCLEOTIDE SEQUENCE [LARGE SCALE GENOMIC DNA]</scope>
</reference>
<reference key="3">
    <citation type="journal article" date="1990" name="J. Virol.">
        <title>Structure of the bacteriophage T4 baseplate as determined by chemical cross-linking.</title>
        <authorList>
            <person name="Watts N.R."/>
            <person name="Coombs D.H."/>
        </authorList>
    </citation>
    <scope>SUBCELLULAR LOCATION</scope>
</reference>
<reference key="4">
    <citation type="journal article" date="2003" name="Cell. Mol. Life Sci.">
        <title>Structure and morphogenesis of bacteriophage T4.</title>
        <authorList>
            <person name="Leiman P.G."/>
            <person name="Kanamaru S."/>
            <person name="Mesyanzhinov V.V."/>
            <person name="Arisaka F."/>
            <person name="Rossmann M.G."/>
        </authorList>
    </citation>
    <scope>REVIEW</scope>
</reference>
<reference key="5">
    <citation type="journal article" date="2010" name="Virol. J.">
        <title>Morphogenesis of the T4 tail and tail fibers.</title>
        <authorList>
            <person name="Leiman P.G."/>
            <person name="Arisaka F."/>
            <person name="van Raaij M.J."/>
            <person name="Kostyuchenko V.A."/>
            <person name="Aksyuk A.A."/>
            <person name="Kanamaru S."/>
            <person name="Rossmann M.G."/>
        </authorList>
    </citation>
    <scope>REVIEW ON FUNCTION</scope>
</reference>
<reference key="6">
    <citation type="journal article" date="2010" name="J. Mol. Biol.">
        <title>The baseplate wedges of bacteriophage T4 spontaneously assemble into hubless baseplate-like structure in vitro.</title>
        <authorList>
            <person name="Yap M.L."/>
            <person name="Mio K."/>
            <person name="Leiman P.G."/>
            <person name="Kanamaru S."/>
            <person name="Arisaka F."/>
        </authorList>
    </citation>
    <scope>SUBUNIT</scope>
</reference>
<reference key="7">
    <citation type="journal article" date="1999" name="Structure">
        <title>The structure of bacteriophage T4 gene product 9: the trigger for tail contraction.</title>
        <authorList>
            <person name="Kostyuchenko V.A."/>
            <person name="Navruzbekov G.A."/>
            <person name="Kurochkina L.P."/>
            <person name="Strelkov S.V."/>
            <person name="Mesyanzhinov V.V."/>
            <person name="Rossmann M.G."/>
        </authorList>
    </citation>
    <scope>X-RAY CRYSTALLOGRAPHY (2.3 ANGSTROMS)</scope>
    <scope>FUNCTION</scope>
    <scope>SUBUNIT</scope>
    <scope>DOMAIN</scope>
    <scope>COILED COIL</scope>
</reference>
<reference key="8">
    <citation type="journal article" date="2004" name="Cell">
        <title>Three-dimensional rearrangement of proteins in the tail of bacteriophage T4 on infection of its host.</title>
        <authorList>
            <person name="Leiman P.G."/>
            <person name="Chipman P.R."/>
            <person name="Kostyuchenko V.A."/>
            <person name="Mesyanzhinov V.V."/>
            <person name="Rossmann M.G."/>
        </authorList>
    </citation>
    <scope>STRUCTURE BY ELECTRON MICROSCOPY (17.0 ANGSTROMS) OF THE CONTRACTED TAIL</scope>
    <scope>SUBCELLULAR LOCATION</scope>
</reference>
<reference key="9">
    <citation type="journal article" date="2016" name="Nature">
        <title>Structure of the T4 baseplate and its function in triggering sheath contraction.</title>
        <authorList>
            <person name="Taylor N.M."/>
            <person name="Prokhorov N.S."/>
            <person name="Guerrero-Ferreira R.C."/>
            <person name="Shneider M.M."/>
            <person name="Browning C."/>
            <person name="Goldie K.N."/>
            <person name="Stahlberg H."/>
            <person name="Leiman P.G."/>
        </authorList>
    </citation>
    <scope>STRUCTURE BY ELECTRON MICROSCOPY (4.11 ANGSTROMS)</scope>
    <scope>SUBUNIT</scope>
    <scope>SUBCELLULAR LOCATION</scope>
    <scope>FUNCTION</scope>
    <scope>IDENTIFICATION IN THE TAIL FIBER NETWORK</scope>
</reference>
<dbReference type="EMBL" id="X14192">
    <property type="protein sequence ID" value="CAA32395.1"/>
    <property type="molecule type" value="Genomic_DNA"/>
</dbReference>
<dbReference type="EMBL" id="AF158101">
    <property type="protein sequence ID" value="AAD42520.1"/>
    <property type="molecule type" value="Genomic_DNA"/>
</dbReference>
<dbReference type="PIR" id="S04082">
    <property type="entry name" value="GNBPT4"/>
</dbReference>
<dbReference type="RefSeq" id="NP_049767.1">
    <property type="nucleotide sequence ID" value="NC_000866.4"/>
</dbReference>
<dbReference type="PDB" id="1PDP">
    <property type="method" value="EM"/>
    <property type="resolution" value="12.00 A"/>
    <property type="chains" value="A/B/C/D/E/F/G/H/I/J/K/L/M/N/O/P/Q/R=1-288"/>
</dbReference>
<dbReference type="PDB" id="1QEX">
    <property type="method" value="X-ray"/>
    <property type="resolution" value="2.30 A"/>
    <property type="chains" value="A/B=1-288"/>
</dbReference>
<dbReference type="PDB" id="1S2E">
    <property type="method" value="X-ray"/>
    <property type="resolution" value="2.30 A"/>
    <property type="chains" value="A/B=1-288"/>
</dbReference>
<dbReference type="PDB" id="1TJA">
    <property type="method" value="EM"/>
    <property type="resolution" value="16.00 A"/>
    <property type="chains" value="C/D/E=1-288"/>
</dbReference>
<dbReference type="PDB" id="1ZKU">
    <property type="method" value="EM"/>
    <property type="resolution" value="15.00 A"/>
    <property type="chains" value="A/B/C/D/E/F/G/H/I/J/K/L/M/N/O/P/Q/R=1-288"/>
</dbReference>
<dbReference type="PDB" id="5IV5">
    <property type="method" value="EM"/>
    <property type="resolution" value="4.11 A"/>
    <property type="chains" value="AA/AB/CC/CD/CE/EF/EG/EH/F/G/GI/GJ/H/HA/c/d/e/z=1-288"/>
</dbReference>
<dbReference type="PDB" id="5IV7">
    <property type="method" value="EM"/>
    <property type="resolution" value="6.77 A"/>
    <property type="chains" value="AB/AC/AD/CD/CE/CF/EF/EG/F/FA/G/H/V/W/X/l/m/n=1-288"/>
</dbReference>
<dbReference type="PDBsum" id="1PDP"/>
<dbReference type="PDBsum" id="1QEX"/>
<dbReference type="PDBsum" id="1S2E"/>
<dbReference type="PDBsum" id="1TJA"/>
<dbReference type="PDBsum" id="1ZKU"/>
<dbReference type="PDBsum" id="5IV5"/>
<dbReference type="PDBsum" id="5IV7"/>
<dbReference type="SMR" id="P10927"/>
<dbReference type="TCDB" id="1.K.1.1.1">
    <property type="family name" value="the gp27/5 t4-baseplate (t4-bp) family"/>
</dbReference>
<dbReference type="GeneID" id="1258617"/>
<dbReference type="KEGG" id="vg:1258617"/>
<dbReference type="OrthoDB" id="5964at10239"/>
<dbReference type="EvolutionaryTrace" id="P10927"/>
<dbReference type="Proteomes" id="UP000009087">
    <property type="component" value="Segment"/>
</dbReference>
<dbReference type="GO" id="GO:0098025">
    <property type="term" value="C:virus tail, baseplate"/>
    <property type="evidence" value="ECO:0000314"/>
    <property type="project" value="UniProtKB"/>
</dbReference>
<dbReference type="GO" id="GO:0019076">
    <property type="term" value="P:viral release from host cell"/>
    <property type="evidence" value="ECO:0007669"/>
    <property type="project" value="InterPro"/>
</dbReference>
<dbReference type="GO" id="GO:0098003">
    <property type="term" value="P:viral tail assembly"/>
    <property type="evidence" value="ECO:0007669"/>
    <property type="project" value="UniProtKB-KW"/>
</dbReference>
<dbReference type="FunFam" id="2.60.40.1680:FF:000001">
    <property type="entry name" value="Baseplate wedge tail fiber connector"/>
    <property type="match status" value="1"/>
</dbReference>
<dbReference type="Gene3D" id="2.60.40.1680">
    <property type="entry name" value="4-oxalocrotonate tautomerase-like"/>
    <property type="match status" value="1"/>
</dbReference>
<dbReference type="Gene3D" id="1.20.5.960">
    <property type="entry name" value="Bacteriophage t4 gene product 9 (gp9)"/>
    <property type="match status" value="1"/>
</dbReference>
<dbReference type="Gene3D" id="2.60.120.640">
    <property type="entry name" value="gp9"/>
    <property type="match status" value="1"/>
</dbReference>
<dbReference type="InterPro" id="IPR056391">
    <property type="entry name" value="Baseplate_gp9_C"/>
</dbReference>
<dbReference type="InterPro" id="IPR008987">
    <property type="entry name" value="Baseplate_struct_prot_Gp9/10_N"/>
</dbReference>
<dbReference type="InterPro" id="IPR036240">
    <property type="entry name" value="Gp9-like_sf"/>
</dbReference>
<dbReference type="InterPro" id="IPR027411">
    <property type="entry name" value="Gp9/Gp10_mid_dom_sf"/>
</dbReference>
<dbReference type="InterPro" id="IPR027412">
    <property type="entry name" value="Gp9_C_dom_sf"/>
</dbReference>
<dbReference type="Pfam" id="PF23618">
    <property type="entry name" value="T4_gp9_10_C"/>
    <property type="match status" value="1"/>
</dbReference>
<dbReference type="Pfam" id="PF07880">
    <property type="entry name" value="T4_gp9_10_N"/>
    <property type="match status" value="1"/>
</dbReference>
<dbReference type="SUPFAM" id="SSF50017">
    <property type="entry name" value="gp9"/>
    <property type="match status" value="1"/>
</dbReference>